<name>NORW_ESCF3</name>
<dbReference type="EC" id="1.18.1.-" evidence="1"/>
<dbReference type="EMBL" id="CU928158">
    <property type="protein sequence ID" value="CAQ87929.1"/>
    <property type="molecule type" value="Genomic_DNA"/>
</dbReference>
<dbReference type="RefSeq" id="WP_000064762.1">
    <property type="nucleotide sequence ID" value="NC_011740.1"/>
</dbReference>
<dbReference type="SMR" id="B7LW23"/>
<dbReference type="GeneID" id="75058563"/>
<dbReference type="KEGG" id="efe:EFER_0367"/>
<dbReference type="HOGENOM" id="CLU_003291_4_4_6"/>
<dbReference type="OrthoDB" id="9808980at2"/>
<dbReference type="UniPathway" id="UPA00638"/>
<dbReference type="Proteomes" id="UP000000745">
    <property type="component" value="Chromosome"/>
</dbReference>
<dbReference type="GO" id="GO:0005737">
    <property type="term" value="C:cytoplasm"/>
    <property type="evidence" value="ECO:0007669"/>
    <property type="project" value="UniProtKB-SubCell"/>
</dbReference>
<dbReference type="GO" id="GO:0016731">
    <property type="term" value="F:oxidoreductase activity, acting on iron-sulfur proteins as donors, NAD or NADP as acceptor"/>
    <property type="evidence" value="ECO:0007669"/>
    <property type="project" value="UniProtKB-UniRule"/>
</dbReference>
<dbReference type="FunFam" id="3.50.50.60:FF:000075">
    <property type="entry name" value="Nitric oxide reductase FlRd-NAD(+) reductase"/>
    <property type="match status" value="1"/>
</dbReference>
<dbReference type="Gene3D" id="3.30.390.120">
    <property type="match status" value="1"/>
</dbReference>
<dbReference type="Gene3D" id="3.50.50.60">
    <property type="entry name" value="FAD/NAD(P)-binding domain"/>
    <property type="match status" value="2"/>
</dbReference>
<dbReference type="HAMAP" id="MF_01313">
    <property type="entry name" value="NorW"/>
    <property type="match status" value="1"/>
</dbReference>
<dbReference type="InterPro" id="IPR050260">
    <property type="entry name" value="FAD-bd_OxRdtase"/>
</dbReference>
<dbReference type="InterPro" id="IPR036188">
    <property type="entry name" value="FAD/NAD-bd_sf"/>
</dbReference>
<dbReference type="InterPro" id="IPR023753">
    <property type="entry name" value="FAD/NAD-binding_dom"/>
</dbReference>
<dbReference type="InterPro" id="IPR023961">
    <property type="entry name" value="NO_rdtase_NorW"/>
</dbReference>
<dbReference type="InterPro" id="IPR041364">
    <property type="entry name" value="Rbx-bd"/>
</dbReference>
<dbReference type="NCBIfam" id="NF003437">
    <property type="entry name" value="PRK04965.1"/>
    <property type="match status" value="1"/>
</dbReference>
<dbReference type="PANTHER" id="PTHR43429:SF3">
    <property type="entry name" value="NITRITE REDUCTASE [NAD(P)H]"/>
    <property type="match status" value="1"/>
</dbReference>
<dbReference type="PANTHER" id="PTHR43429">
    <property type="entry name" value="PYRIDINE NUCLEOTIDE-DISULFIDE OXIDOREDUCTASE DOMAIN-CONTAINING"/>
    <property type="match status" value="1"/>
</dbReference>
<dbReference type="Pfam" id="PF07992">
    <property type="entry name" value="Pyr_redox_2"/>
    <property type="match status" value="1"/>
</dbReference>
<dbReference type="Pfam" id="PF18113">
    <property type="entry name" value="Rbx_binding"/>
    <property type="match status" value="1"/>
</dbReference>
<dbReference type="PRINTS" id="PR00368">
    <property type="entry name" value="FADPNR"/>
</dbReference>
<dbReference type="PRINTS" id="PR00411">
    <property type="entry name" value="PNDRDTASEI"/>
</dbReference>
<dbReference type="SUPFAM" id="SSF51905">
    <property type="entry name" value="FAD/NAD(P)-binding domain"/>
    <property type="match status" value="1"/>
</dbReference>
<proteinExistence type="inferred from homology"/>
<comment type="function">
    <text evidence="1">One of at least two accessory proteins for anaerobic nitric oxide (NO) reductase. Reduces the rubredoxin moiety of NO reductase.</text>
</comment>
<comment type="catalytic activity">
    <reaction evidence="1">
        <text>2 reduced [nitric oxide reductase rubredoxin domain] + NAD(+) + H(+) = 2 oxidized [nitric oxide reductase rubredoxin domain] + NADH</text>
        <dbReference type="Rhea" id="RHEA:42960"/>
        <dbReference type="Rhea" id="RHEA-COMP:10304"/>
        <dbReference type="Rhea" id="RHEA-COMP:10305"/>
        <dbReference type="ChEBI" id="CHEBI:15378"/>
        <dbReference type="ChEBI" id="CHEBI:29033"/>
        <dbReference type="ChEBI" id="CHEBI:29034"/>
        <dbReference type="ChEBI" id="CHEBI:57540"/>
        <dbReference type="ChEBI" id="CHEBI:57945"/>
    </reaction>
</comment>
<comment type="cofactor">
    <cofactor evidence="1">
        <name>FAD</name>
        <dbReference type="ChEBI" id="CHEBI:57692"/>
    </cofactor>
</comment>
<comment type="pathway">
    <text evidence="1">Nitrogen metabolism; nitric oxide reduction.</text>
</comment>
<comment type="subcellular location">
    <subcellularLocation>
        <location evidence="1">Cytoplasm</location>
    </subcellularLocation>
</comment>
<comment type="similarity">
    <text evidence="1">Belongs to the FAD-dependent oxidoreductase family.</text>
</comment>
<accession>B7LW23</accession>
<organism>
    <name type="scientific">Escherichia fergusonii (strain ATCC 35469 / DSM 13698 / CCUG 18766 / IAM 14443 / JCM 21226 / LMG 7866 / NBRC 102419 / NCTC 12128 / CDC 0568-73)</name>
    <dbReference type="NCBI Taxonomy" id="585054"/>
    <lineage>
        <taxon>Bacteria</taxon>
        <taxon>Pseudomonadati</taxon>
        <taxon>Pseudomonadota</taxon>
        <taxon>Gammaproteobacteria</taxon>
        <taxon>Enterobacterales</taxon>
        <taxon>Enterobacteriaceae</taxon>
        <taxon>Escherichia</taxon>
    </lineage>
</organism>
<protein>
    <recommendedName>
        <fullName evidence="1">Nitric oxide reductase FlRd-NAD(+) reductase</fullName>
        <ecNumber evidence="1">1.18.1.-</ecNumber>
    </recommendedName>
    <alternativeName>
        <fullName evidence="1">Flavorubredoxin reductase</fullName>
        <shortName evidence="1">FlRd-reductase</shortName>
        <shortName evidence="1">FlavoRb reductase</shortName>
    </alternativeName>
</protein>
<evidence type="ECO:0000255" key="1">
    <source>
        <dbReference type="HAMAP-Rule" id="MF_01313"/>
    </source>
</evidence>
<feature type="chain" id="PRO_1000141174" description="Nitric oxide reductase FlRd-NAD(+) reductase">
    <location>
        <begin position="1"/>
        <end position="377"/>
    </location>
</feature>
<reference key="1">
    <citation type="journal article" date="2009" name="PLoS Genet.">
        <title>Organised genome dynamics in the Escherichia coli species results in highly diverse adaptive paths.</title>
        <authorList>
            <person name="Touchon M."/>
            <person name="Hoede C."/>
            <person name="Tenaillon O."/>
            <person name="Barbe V."/>
            <person name="Baeriswyl S."/>
            <person name="Bidet P."/>
            <person name="Bingen E."/>
            <person name="Bonacorsi S."/>
            <person name="Bouchier C."/>
            <person name="Bouvet O."/>
            <person name="Calteau A."/>
            <person name="Chiapello H."/>
            <person name="Clermont O."/>
            <person name="Cruveiller S."/>
            <person name="Danchin A."/>
            <person name="Diard M."/>
            <person name="Dossat C."/>
            <person name="Karoui M.E."/>
            <person name="Frapy E."/>
            <person name="Garry L."/>
            <person name="Ghigo J.M."/>
            <person name="Gilles A.M."/>
            <person name="Johnson J."/>
            <person name="Le Bouguenec C."/>
            <person name="Lescat M."/>
            <person name="Mangenot S."/>
            <person name="Martinez-Jehanne V."/>
            <person name="Matic I."/>
            <person name="Nassif X."/>
            <person name="Oztas S."/>
            <person name="Petit M.A."/>
            <person name="Pichon C."/>
            <person name="Rouy Z."/>
            <person name="Ruf C.S."/>
            <person name="Schneider D."/>
            <person name="Tourret J."/>
            <person name="Vacherie B."/>
            <person name="Vallenet D."/>
            <person name="Medigue C."/>
            <person name="Rocha E.P.C."/>
            <person name="Denamur E."/>
        </authorList>
    </citation>
    <scope>NUCLEOTIDE SEQUENCE [LARGE SCALE GENOMIC DNA]</scope>
    <source>
        <strain>ATCC 35469 / DSM 13698 / BCRC 15582 / CCUG 18766 / IAM 14443 / JCM 21226 / LMG 7866 / NBRC 102419 / NCTC 12128 / CDC 0568-73</strain>
    </source>
</reference>
<gene>
    <name evidence="1" type="primary">norW</name>
    <name evidence="1" type="synonym">flrR</name>
    <name type="ordered locus">EFER_0367</name>
</gene>
<keyword id="KW-0963">Cytoplasm</keyword>
<keyword id="KW-0274">FAD</keyword>
<keyword id="KW-0285">Flavoprotein</keyword>
<keyword id="KW-0520">NAD</keyword>
<keyword id="KW-0560">Oxidoreductase</keyword>
<sequence length="377" mass="41289">MSNGIVIIGSGFAARQLVKNIRKQDTGIPLTLIAADSMDEYNKPDLSHVISQGQRADDLTRQTAGEFAEQFNLRLFPHTWVTDIDAEAHVVKSQNNQWQYDKLVLATGANAFVPPVPGRELMLTLNSQQEYRACETQLRDARRVLIVGGGLIGSELAMDFCRAGKAVTLIDNAASILASLMPPEVSSRLQHRLTEMGVHLLLKSQLQGLEKTNSGILATLDRQRSTEVDAVIAATGLRPETALARRAGLTINRGVCVDSYLQTSNADIYALGDCAEINGQVLPFLQPIQLSAMVLAKNLLGNNTPLKLPAMLVKIKTPELPLHLAGETQRRDLRWQICTESQGMVARGVDDADQLRAFVVSEDRMKEAFGLLKTLPM</sequence>